<protein>
    <recommendedName>
        <fullName>Neurogenic locus notch homolog protein 1</fullName>
        <shortName>Notch 1</shortName>
    </recommendedName>
    <component>
        <recommendedName>
            <fullName>Notch 1 extracellular truncation</fullName>
            <shortName>NEXT</shortName>
        </recommendedName>
    </component>
    <component>
        <recommendedName>
            <fullName>Notch 1 intracellular domain</fullName>
            <shortName>NICD</shortName>
        </recommendedName>
    </component>
</protein>
<reference key="1">
    <citation type="journal article" date="1993" name="Mech. Dev.">
        <title>A zebrafish homologue of the Drosophila neurogenic gene Notch and its pattern of transcription during early embryogenesis.</title>
        <authorList>
            <person name="Bierkamp C."/>
            <person name="Campos-Ortega J.A."/>
        </authorList>
    </citation>
    <scope>NUCLEOTIDE SEQUENCE [MRNA]</scope>
    <source>
        <tissue>Embryo</tissue>
    </source>
</reference>
<dbReference type="EMBL" id="X69088">
    <property type="protein sequence ID" value="CAA48831.1"/>
    <property type="molecule type" value="mRNA"/>
</dbReference>
<dbReference type="PIR" id="S42612">
    <property type="entry name" value="S42612"/>
</dbReference>
<dbReference type="RefSeq" id="NP_571516.1">
    <property type="nucleotide sequence ID" value="NM_131441.1"/>
</dbReference>
<dbReference type="SMR" id="P46530"/>
<dbReference type="BioGRID" id="78873">
    <property type="interactions" value="3"/>
</dbReference>
<dbReference type="FunCoup" id="P46530">
    <property type="interactions" value="195"/>
</dbReference>
<dbReference type="STRING" id="7955.ENSDARP00000137942"/>
<dbReference type="GlyCosmos" id="P46530">
    <property type="glycosylation" value="6 sites, No reported glycans"/>
</dbReference>
<dbReference type="PaxDb" id="7955-ENSDARP00000046632"/>
<dbReference type="GeneID" id="30718"/>
<dbReference type="KEGG" id="dre:30718"/>
<dbReference type="AGR" id="ZFIN:ZDB-GENE-990415-173"/>
<dbReference type="CTD" id="30718"/>
<dbReference type="ZFIN" id="ZDB-GENE-990415-173">
    <property type="gene designation" value="notch1a"/>
</dbReference>
<dbReference type="eggNOG" id="KOG1217">
    <property type="taxonomic scope" value="Eukaryota"/>
</dbReference>
<dbReference type="InParanoid" id="P46530"/>
<dbReference type="OrthoDB" id="283575at2759"/>
<dbReference type="PhylomeDB" id="P46530"/>
<dbReference type="SignaLink" id="P46530"/>
<dbReference type="PRO" id="PR:P46530"/>
<dbReference type="Proteomes" id="UP000000437">
    <property type="component" value="Chromosome 21"/>
</dbReference>
<dbReference type="GO" id="GO:0005634">
    <property type="term" value="C:nucleus"/>
    <property type="evidence" value="ECO:0007669"/>
    <property type="project" value="UniProtKB-SubCell"/>
</dbReference>
<dbReference type="GO" id="GO:0005886">
    <property type="term" value="C:plasma membrane"/>
    <property type="evidence" value="ECO:0000315"/>
    <property type="project" value="ZFIN"/>
</dbReference>
<dbReference type="GO" id="GO:0005509">
    <property type="term" value="F:calcium ion binding"/>
    <property type="evidence" value="ECO:0007669"/>
    <property type="project" value="InterPro"/>
</dbReference>
<dbReference type="GO" id="GO:0005112">
    <property type="term" value="F:Notch binding"/>
    <property type="evidence" value="ECO:0000318"/>
    <property type="project" value="GO_Central"/>
</dbReference>
<dbReference type="GO" id="GO:0038023">
    <property type="term" value="F:signaling receptor activity"/>
    <property type="evidence" value="ECO:0007669"/>
    <property type="project" value="InterPro"/>
</dbReference>
<dbReference type="GO" id="GO:0001525">
    <property type="term" value="P:angiogenesis"/>
    <property type="evidence" value="ECO:0007669"/>
    <property type="project" value="UniProtKB-KW"/>
</dbReference>
<dbReference type="GO" id="GO:0009952">
    <property type="term" value="P:anterior/posterior pattern specification"/>
    <property type="evidence" value="ECO:0000315"/>
    <property type="project" value="ZFIN"/>
</dbReference>
<dbReference type="GO" id="GO:0060271">
    <property type="term" value="P:cilium assembly"/>
    <property type="evidence" value="ECO:0000250"/>
    <property type="project" value="UniProtKB"/>
</dbReference>
<dbReference type="GO" id="GO:0007368">
    <property type="term" value="P:determination of left/right symmetry"/>
    <property type="evidence" value="ECO:0000315"/>
    <property type="project" value="ZFIN"/>
</dbReference>
<dbReference type="GO" id="GO:0035907">
    <property type="term" value="P:dorsal aorta development"/>
    <property type="evidence" value="ECO:0000315"/>
    <property type="project" value="ZFIN"/>
</dbReference>
<dbReference type="GO" id="GO:0031017">
    <property type="term" value="P:exocrine pancreas development"/>
    <property type="evidence" value="ECO:0000315"/>
    <property type="project" value="ZFIN"/>
</dbReference>
<dbReference type="GO" id="GO:0048699">
    <property type="term" value="P:generation of neurons"/>
    <property type="evidence" value="ECO:0000315"/>
    <property type="project" value="ZFIN"/>
</dbReference>
<dbReference type="GO" id="GO:0021986">
    <property type="term" value="P:habenula development"/>
    <property type="evidence" value="ECO:0000315"/>
    <property type="project" value="ZFIN"/>
</dbReference>
<dbReference type="GO" id="GO:0002244">
    <property type="term" value="P:hematopoietic progenitor cell differentiation"/>
    <property type="evidence" value="ECO:0000315"/>
    <property type="project" value="ZFIN"/>
</dbReference>
<dbReference type="GO" id="GO:0060218">
    <property type="term" value="P:hematopoietic stem cell differentiation"/>
    <property type="evidence" value="ECO:0000315"/>
    <property type="project" value="ZFIN"/>
</dbReference>
<dbReference type="GO" id="GO:0055016">
    <property type="term" value="P:hypochord development"/>
    <property type="evidence" value="ECO:0000315"/>
    <property type="project" value="ZFIN"/>
</dbReference>
<dbReference type="GO" id="GO:0050768">
    <property type="term" value="P:negative regulation of neurogenesis"/>
    <property type="evidence" value="ECO:0000316"/>
    <property type="project" value="ZFIN"/>
</dbReference>
<dbReference type="GO" id="GO:0001840">
    <property type="term" value="P:neural plate development"/>
    <property type="evidence" value="ECO:0000316"/>
    <property type="project" value="ZFIN"/>
</dbReference>
<dbReference type="GO" id="GO:0061314">
    <property type="term" value="P:Notch signaling involved in heart development"/>
    <property type="evidence" value="ECO:0000250"/>
    <property type="project" value="UniProtKB"/>
</dbReference>
<dbReference type="GO" id="GO:0007219">
    <property type="term" value="P:Notch signaling pathway"/>
    <property type="evidence" value="ECO:0000315"/>
    <property type="project" value="ZFIN"/>
</dbReference>
<dbReference type="GO" id="GO:0031016">
    <property type="term" value="P:pancreas development"/>
    <property type="evidence" value="ECO:0000315"/>
    <property type="project" value="ZFIN"/>
</dbReference>
<dbReference type="GO" id="GO:0048936">
    <property type="term" value="P:peripheral nervous system neuron axonogenesis"/>
    <property type="evidence" value="ECO:0000316"/>
    <property type="project" value="ZFIN"/>
</dbReference>
<dbReference type="GO" id="GO:0048337">
    <property type="term" value="P:positive regulation of mesodermal cell fate specification"/>
    <property type="evidence" value="ECO:0000315"/>
    <property type="project" value="ZFIN"/>
</dbReference>
<dbReference type="GO" id="GO:0006355">
    <property type="term" value="P:regulation of DNA-templated transcription"/>
    <property type="evidence" value="ECO:0007669"/>
    <property type="project" value="InterPro"/>
</dbReference>
<dbReference type="GO" id="GO:0042663">
    <property type="term" value="P:regulation of endodermal cell fate specification"/>
    <property type="evidence" value="ECO:0000315"/>
    <property type="project" value="ZFIN"/>
</dbReference>
<dbReference type="GO" id="GO:1901222">
    <property type="term" value="P:regulation of non-canonical NF-kappaB signal transduction"/>
    <property type="evidence" value="ECO:0000315"/>
    <property type="project" value="ZFIN"/>
</dbReference>
<dbReference type="GO" id="GO:0048259">
    <property type="term" value="P:regulation of receptor-mediated endocytosis"/>
    <property type="evidence" value="ECO:0000316"/>
    <property type="project" value="ZFIN"/>
</dbReference>
<dbReference type="GO" id="GO:0021523">
    <property type="term" value="P:somatic motor neuron differentiation"/>
    <property type="evidence" value="ECO:0000315"/>
    <property type="project" value="ZFIN"/>
</dbReference>
<dbReference type="GO" id="GO:0001756">
    <property type="term" value="P:somitogenesis"/>
    <property type="evidence" value="ECO:0000315"/>
    <property type="project" value="ZFIN"/>
</dbReference>
<dbReference type="GO" id="GO:0021531">
    <property type="term" value="P:spinal cord radial glial cell differentiation"/>
    <property type="evidence" value="ECO:0000315"/>
    <property type="project" value="ZFIN"/>
</dbReference>
<dbReference type="GO" id="GO:0021514">
    <property type="term" value="P:ventral spinal cord interneuron differentiation"/>
    <property type="evidence" value="ECO:0000315"/>
    <property type="project" value="ZFIN"/>
</dbReference>
<dbReference type="CDD" id="cd00054">
    <property type="entry name" value="EGF_CA"/>
    <property type="match status" value="28"/>
</dbReference>
<dbReference type="CDD" id="cd21702">
    <property type="entry name" value="JMTM_Notch1"/>
    <property type="match status" value="1"/>
</dbReference>
<dbReference type="FunFam" id="2.10.25.10:FF:000659">
    <property type="entry name" value="Crumbs cell polarity complex component 2b"/>
    <property type="match status" value="1"/>
</dbReference>
<dbReference type="FunFam" id="2.10.25.10:FF:000230">
    <property type="entry name" value="Delta-like protein"/>
    <property type="match status" value="1"/>
</dbReference>
<dbReference type="FunFam" id="2.10.25.10:FF:000151">
    <property type="entry name" value="FAT atypical cadherin 4"/>
    <property type="match status" value="1"/>
</dbReference>
<dbReference type="FunFam" id="1.25.40.20:FF:000005">
    <property type="entry name" value="Neurogenic locus notch 1"/>
    <property type="match status" value="1"/>
</dbReference>
<dbReference type="FunFam" id="2.10.25.10:FF:000004">
    <property type="entry name" value="Neurogenic locus notch 1"/>
    <property type="match status" value="8"/>
</dbReference>
<dbReference type="FunFam" id="2.10.25.10:FF:000080">
    <property type="entry name" value="Neurogenic locus notch 1"/>
    <property type="match status" value="2"/>
</dbReference>
<dbReference type="FunFam" id="2.10.25.10:FF:000136">
    <property type="entry name" value="Neurogenic locus notch 1"/>
    <property type="match status" value="1"/>
</dbReference>
<dbReference type="FunFam" id="2.10.25.10:FF:000279">
    <property type="entry name" value="Neurogenic locus notch 1"/>
    <property type="match status" value="1"/>
</dbReference>
<dbReference type="FunFam" id="3.30.300.320:FF:000001">
    <property type="entry name" value="Neurogenic locus notch 1"/>
    <property type="match status" value="1"/>
</dbReference>
<dbReference type="FunFam" id="3.30.70.3310:FF:000003">
    <property type="entry name" value="Neurogenic locus notch 1"/>
    <property type="match status" value="1"/>
</dbReference>
<dbReference type="FunFam" id="2.10.25.10:FF:000558">
    <property type="entry name" value="Neurogenic locus notch homolog protein 1"/>
    <property type="match status" value="1"/>
</dbReference>
<dbReference type="FunFam" id="2.10.25.10:FF:000031">
    <property type="entry name" value="neurogenic locus notch homolog protein 3"/>
    <property type="match status" value="2"/>
</dbReference>
<dbReference type="FunFam" id="2.10.25.10:FF:000100">
    <property type="entry name" value="neurogenic locus notch homolog protein 3"/>
    <property type="match status" value="1"/>
</dbReference>
<dbReference type="FunFam" id="2.10.25.10:FF:000455">
    <property type="entry name" value="neurogenic locus notch homolog protein 3"/>
    <property type="match status" value="1"/>
</dbReference>
<dbReference type="FunFam" id="2.10.25.10:FF:000327">
    <property type="entry name" value="neurogenic locus notch homolog protein 4"/>
    <property type="match status" value="1"/>
</dbReference>
<dbReference type="FunFam" id="2.10.25.10:FF:000060">
    <property type="entry name" value="Neurogenic locus notch protein 1"/>
    <property type="match status" value="1"/>
</dbReference>
<dbReference type="FunFam" id="2.10.25.10:FF:000092">
    <property type="entry name" value="Neurogenic locus notch protein 1"/>
    <property type="match status" value="1"/>
</dbReference>
<dbReference type="FunFam" id="2.10.25.10:FF:000127">
    <property type="entry name" value="Neurogenic locus notch protein 1"/>
    <property type="match status" value="2"/>
</dbReference>
<dbReference type="FunFam" id="2.10.25.10:FF:000157">
    <property type="entry name" value="Neurogenic locus notch protein 1"/>
    <property type="match status" value="1"/>
</dbReference>
<dbReference type="FunFam" id="2.10.25.10:FF:000524">
    <property type="entry name" value="Neurogenic locus notch protein 1"/>
    <property type="match status" value="1"/>
</dbReference>
<dbReference type="FunFam" id="2.10.25.10:FF:000125">
    <property type="entry name" value="Neurogenic locus notch protein-like"/>
    <property type="match status" value="1"/>
</dbReference>
<dbReference type="FunFam" id="2.10.25.10:FF:000146">
    <property type="entry name" value="Putative neurogenic locus notch"/>
    <property type="match status" value="1"/>
</dbReference>
<dbReference type="FunFam" id="2.10.25.10:FF:000472">
    <property type="entry name" value="Uncharacterized protein, isoform A"/>
    <property type="match status" value="1"/>
</dbReference>
<dbReference type="FunFam" id="2.10.25.10:FF:000391">
    <property type="entry name" value="Weary, isoform C"/>
    <property type="match status" value="1"/>
</dbReference>
<dbReference type="Gene3D" id="3.30.300.320">
    <property type="match status" value="1"/>
</dbReference>
<dbReference type="Gene3D" id="3.30.70.3310">
    <property type="match status" value="1"/>
</dbReference>
<dbReference type="Gene3D" id="1.25.40.20">
    <property type="entry name" value="Ankyrin repeat-containing domain"/>
    <property type="match status" value="1"/>
</dbReference>
<dbReference type="Gene3D" id="2.10.25.10">
    <property type="entry name" value="Laminin"/>
    <property type="match status" value="36"/>
</dbReference>
<dbReference type="InterPro" id="IPR002110">
    <property type="entry name" value="Ankyrin_rpt"/>
</dbReference>
<dbReference type="InterPro" id="IPR036770">
    <property type="entry name" value="Ankyrin_rpt-contain_sf"/>
</dbReference>
<dbReference type="InterPro" id="IPR001881">
    <property type="entry name" value="EGF-like_Ca-bd_dom"/>
</dbReference>
<dbReference type="InterPro" id="IPR013032">
    <property type="entry name" value="EGF-like_CS"/>
</dbReference>
<dbReference type="InterPro" id="IPR000742">
    <property type="entry name" value="EGF-like_dom"/>
</dbReference>
<dbReference type="InterPro" id="IPR000152">
    <property type="entry name" value="EGF-type_Asp/Asn_hydroxyl_site"/>
</dbReference>
<dbReference type="InterPro" id="IPR018097">
    <property type="entry name" value="EGF_Ca-bd_CS"/>
</dbReference>
<dbReference type="InterPro" id="IPR009030">
    <property type="entry name" value="Growth_fac_rcpt_cys_sf"/>
</dbReference>
<dbReference type="InterPro" id="IPR008297">
    <property type="entry name" value="Notch"/>
</dbReference>
<dbReference type="InterPro" id="IPR035993">
    <property type="entry name" value="Notch-like_dom_sf"/>
</dbReference>
<dbReference type="InterPro" id="IPR051355">
    <property type="entry name" value="Notch/Slit_guidance"/>
</dbReference>
<dbReference type="InterPro" id="IPR049883">
    <property type="entry name" value="NOTCH1_EGF-like"/>
</dbReference>
<dbReference type="InterPro" id="IPR022362">
    <property type="entry name" value="Notch_1"/>
</dbReference>
<dbReference type="InterPro" id="IPR024600">
    <property type="entry name" value="Notch_C"/>
</dbReference>
<dbReference type="InterPro" id="IPR000800">
    <property type="entry name" value="Notch_dom"/>
</dbReference>
<dbReference type="InterPro" id="IPR010660">
    <property type="entry name" value="Notch_NOD_dom"/>
</dbReference>
<dbReference type="InterPro" id="IPR011656">
    <property type="entry name" value="Notch_NODP_dom"/>
</dbReference>
<dbReference type="NCBIfam" id="TIGR01167">
    <property type="entry name" value="LPXTG_anchor"/>
    <property type="match status" value="1"/>
</dbReference>
<dbReference type="PANTHER" id="PTHR45836:SF23">
    <property type="entry name" value="NEUROGENIC LOCUS NOTCH HOMOLOG PROTEIN 1"/>
    <property type="match status" value="1"/>
</dbReference>
<dbReference type="PANTHER" id="PTHR45836">
    <property type="entry name" value="SLIT HOMOLOG"/>
    <property type="match status" value="1"/>
</dbReference>
<dbReference type="Pfam" id="PF00023">
    <property type="entry name" value="Ank"/>
    <property type="match status" value="1"/>
</dbReference>
<dbReference type="Pfam" id="PF12796">
    <property type="entry name" value="Ank_2"/>
    <property type="match status" value="2"/>
</dbReference>
<dbReference type="Pfam" id="PF00008">
    <property type="entry name" value="EGF"/>
    <property type="match status" value="22"/>
</dbReference>
<dbReference type="Pfam" id="PF07645">
    <property type="entry name" value="EGF_CA"/>
    <property type="match status" value="3"/>
</dbReference>
<dbReference type="Pfam" id="PF12661">
    <property type="entry name" value="hEGF"/>
    <property type="match status" value="7"/>
</dbReference>
<dbReference type="Pfam" id="PF06816">
    <property type="entry name" value="NOD"/>
    <property type="match status" value="1"/>
</dbReference>
<dbReference type="Pfam" id="PF07684">
    <property type="entry name" value="NODP"/>
    <property type="match status" value="1"/>
</dbReference>
<dbReference type="Pfam" id="PF00066">
    <property type="entry name" value="Notch"/>
    <property type="match status" value="3"/>
</dbReference>
<dbReference type="PIRSF" id="PIRSF002279">
    <property type="entry name" value="Notch"/>
    <property type="match status" value="1"/>
</dbReference>
<dbReference type="PRINTS" id="PR00010">
    <property type="entry name" value="EGFBLOOD"/>
</dbReference>
<dbReference type="PRINTS" id="PR01452">
    <property type="entry name" value="LNOTCHREPEAT"/>
</dbReference>
<dbReference type="PRINTS" id="PR01983">
    <property type="entry name" value="NOTCH"/>
</dbReference>
<dbReference type="PRINTS" id="PR01984">
    <property type="entry name" value="NOTCH1"/>
</dbReference>
<dbReference type="SMART" id="SM00248">
    <property type="entry name" value="ANK"/>
    <property type="match status" value="6"/>
</dbReference>
<dbReference type="SMART" id="SM01334">
    <property type="entry name" value="DUF3454"/>
    <property type="match status" value="1"/>
</dbReference>
<dbReference type="SMART" id="SM00181">
    <property type="entry name" value="EGF"/>
    <property type="match status" value="36"/>
</dbReference>
<dbReference type="SMART" id="SM00179">
    <property type="entry name" value="EGF_CA"/>
    <property type="match status" value="32"/>
</dbReference>
<dbReference type="SMART" id="SM00004">
    <property type="entry name" value="NL"/>
    <property type="match status" value="3"/>
</dbReference>
<dbReference type="SMART" id="SM01338">
    <property type="entry name" value="NOD"/>
    <property type="match status" value="1"/>
</dbReference>
<dbReference type="SMART" id="SM01339">
    <property type="entry name" value="NODP"/>
    <property type="match status" value="1"/>
</dbReference>
<dbReference type="SUPFAM" id="SSF48403">
    <property type="entry name" value="Ankyrin repeat"/>
    <property type="match status" value="1"/>
</dbReference>
<dbReference type="SUPFAM" id="SSF57196">
    <property type="entry name" value="EGF/Laminin"/>
    <property type="match status" value="18"/>
</dbReference>
<dbReference type="SUPFAM" id="SSF57184">
    <property type="entry name" value="Growth factor receptor domain"/>
    <property type="match status" value="6"/>
</dbReference>
<dbReference type="SUPFAM" id="SSF90193">
    <property type="entry name" value="Notch domain"/>
    <property type="match status" value="3"/>
</dbReference>
<dbReference type="PROSITE" id="PS50297">
    <property type="entry name" value="ANK_REP_REGION"/>
    <property type="match status" value="1"/>
</dbReference>
<dbReference type="PROSITE" id="PS50088">
    <property type="entry name" value="ANK_REPEAT"/>
    <property type="match status" value="4"/>
</dbReference>
<dbReference type="PROSITE" id="PS00010">
    <property type="entry name" value="ASX_HYDROXYL"/>
    <property type="match status" value="23"/>
</dbReference>
<dbReference type="PROSITE" id="PS00022">
    <property type="entry name" value="EGF_1"/>
    <property type="match status" value="34"/>
</dbReference>
<dbReference type="PROSITE" id="PS01186">
    <property type="entry name" value="EGF_2"/>
    <property type="match status" value="28"/>
</dbReference>
<dbReference type="PROSITE" id="PS50026">
    <property type="entry name" value="EGF_3"/>
    <property type="match status" value="36"/>
</dbReference>
<dbReference type="PROSITE" id="PS01187">
    <property type="entry name" value="EGF_CA"/>
    <property type="match status" value="22"/>
</dbReference>
<dbReference type="PROSITE" id="PS50258">
    <property type="entry name" value="LNR"/>
    <property type="match status" value="3"/>
</dbReference>
<keyword id="KW-0010">Activator</keyword>
<keyword id="KW-0037">Angiogenesis</keyword>
<keyword id="KW-0040">ANK repeat</keyword>
<keyword id="KW-0106">Calcium</keyword>
<keyword id="KW-1003">Cell membrane</keyword>
<keyword id="KW-0217">Developmental protein</keyword>
<keyword id="KW-0221">Differentiation</keyword>
<keyword id="KW-1015">Disulfide bond</keyword>
<keyword id="KW-0245">EGF-like domain</keyword>
<keyword id="KW-0325">Glycoprotein</keyword>
<keyword id="KW-0472">Membrane</keyword>
<keyword id="KW-0479">Metal-binding</keyword>
<keyword id="KW-0914">Notch signaling pathway</keyword>
<keyword id="KW-0539">Nucleus</keyword>
<keyword id="KW-0675">Receptor</keyword>
<keyword id="KW-1185">Reference proteome</keyword>
<keyword id="KW-0677">Repeat</keyword>
<keyword id="KW-0732">Signal</keyword>
<keyword id="KW-0804">Transcription</keyword>
<keyword id="KW-0805">Transcription regulation</keyword>
<keyword id="KW-0812">Transmembrane</keyword>
<keyword id="KW-1133">Transmembrane helix</keyword>
<organism>
    <name type="scientific">Danio rerio</name>
    <name type="common">Zebrafish</name>
    <name type="synonym">Brachydanio rerio</name>
    <dbReference type="NCBI Taxonomy" id="7955"/>
    <lineage>
        <taxon>Eukaryota</taxon>
        <taxon>Metazoa</taxon>
        <taxon>Chordata</taxon>
        <taxon>Craniata</taxon>
        <taxon>Vertebrata</taxon>
        <taxon>Euteleostomi</taxon>
        <taxon>Actinopterygii</taxon>
        <taxon>Neopterygii</taxon>
        <taxon>Teleostei</taxon>
        <taxon>Ostariophysi</taxon>
        <taxon>Cypriniformes</taxon>
        <taxon>Danionidae</taxon>
        <taxon>Danioninae</taxon>
        <taxon>Danio</taxon>
    </lineage>
</organism>
<feature type="signal peptide" evidence="4">
    <location>
        <begin position="1"/>
        <end position="20"/>
    </location>
</feature>
<feature type="chain" id="PRO_0000007708" description="Neurogenic locus notch homolog protein 1">
    <location>
        <begin position="21"/>
        <end position="2437"/>
    </location>
</feature>
<feature type="chain" id="PRO_0000425200" description="Notch 1 extracellular truncation" evidence="1">
    <location>
        <begin position="1713"/>
        <end position="2437"/>
    </location>
</feature>
<feature type="chain" id="PRO_0000425201" description="Notch 1 intracellular domain" evidence="1">
    <location>
        <begin position="1745"/>
        <end position="2437"/>
    </location>
</feature>
<feature type="topological domain" description="Extracellular" evidence="7">
    <location>
        <begin position="21"/>
        <end position="1726"/>
    </location>
</feature>
<feature type="transmembrane region" description="Helical" evidence="2">
    <location>
        <begin position="1727"/>
        <end position="1747"/>
    </location>
</feature>
<feature type="topological domain" description="Cytoplasmic" evidence="7">
    <location>
        <begin position="1748"/>
        <end position="2437"/>
    </location>
</feature>
<feature type="domain" description="EGF-like 1" evidence="5">
    <location>
        <begin position="21"/>
        <end position="57"/>
    </location>
</feature>
<feature type="domain" description="EGF-like 2" evidence="5">
    <location>
        <begin position="58"/>
        <end position="98"/>
    </location>
</feature>
<feature type="domain" description="EGF-like 3" evidence="5">
    <location>
        <begin position="101"/>
        <end position="138"/>
    </location>
</feature>
<feature type="domain" description="EGF-like 4" evidence="5">
    <location>
        <begin position="139"/>
        <end position="175"/>
    </location>
</feature>
<feature type="domain" description="EGF-like 5; calcium-binding" evidence="5">
    <location>
        <begin position="177"/>
        <end position="215"/>
    </location>
</feature>
<feature type="domain" description="EGF-like 6" evidence="5">
    <location>
        <begin position="217"/>
        <end position="254"/>
    </location>
</feature>
<feature type="domain" description="EGF-like 7; calcium-binding" evidence="5">
    <location>
        <begin position="256"/>
        <end position="292"/>
    </location>
</feature>
<feature type="domain" description="EGF-like 8; calcium-binding" evidence="5">
    <location>
        <begin position="294"/>
        <end position="332"/>
    </location>
</feature>
<feature type="domain" description="EGF-like 9; calcium-binding" evidence="5">
    <location>
        <begin position="334"/>
        <end position="370"/>
    </location>
</feature>
<feature type="domain" description="EGF-like 10" evidence="5">
    <location>
        <begin position="371"/>
        <end position="409"/>
    </location>
</feature>
<feature type="domain" description="EGF-like 11; calcium-binding" evidence="5">
    <location>
        <begin position="411"/>
        <end position="449"/>
    </location>
</feature>
<feature type="domain" description="EGF-like 12; calcium-binding" evidence="5">
    <location>
        <begin position="451"/>
        <end position="487"/>
    </location>
</feature>
<feature type="domain" description="EGF-like 13; calcium-binding" evidence="5">
    <location>
        <begin position="489"/>
        <end position="524"/>
    </location>
</feature>
<feature type="domain" description="EGF-like 14; calcium-binding" evidence="5">
    <location>
        <begin position="526"/>
        <end position="562"/>
    </location>
</feature>
<feature type="domain" description="EGF-like 15; calcium-binding" evidence="5">
    <location>
        <begin position="564"/>
        <end position="599"/>
    </location>
</feature>
<feature type="domain" description="EGF-like 16; calcium-binding" evidence="5">
    <location>
        <begin position="601"/>
        <end position="637"/>
    </location>
</feature>
<feature type="domain" description="EGF-like 17; calcium-binding" evidence="5">
    <location>
        <begin position="639"/>
        <end position="674"/>
    </location>
</feature>
<feature type="domain" description="EGF-like 18; calcium-binding" evidence="5">
    <location>
        <begin position="676"/>
        <end position="712"/>
    </location>
</feature>
<feature type="domain" description="EGF-like 19; calcium-binding" evidence="5">
    <location>
        <begin position="714"/>
        <end position="749"/>
    </location>
</feature>
<feature type="domain" description="EGF-like 20; calcium-binding" evidence="5">
    <location>
        <begin position="751"/>
        <end position="787"/>
    </location>
</feature>
<feature type="domain" description="EGF-like 21; calcium-binding" evidence="5">
    <location>
        <begin position="789"/>
        <end position="825"/>
    </location>
</feature>
<feature type="domain" description="EGF-like 22" evidence="5">
    <location>
        <begin position="827"/>
        <end position="865"/>
    </location>
</feature>
<feature type="domain" description="EGF-like 23; calcium-binding" evidence="5">
    <location>
        <begin position="867"/>
        <end position="903"/>
    </location>
</feature>
<feature type="domain" description="EGF-like 24; calcium-binding" evidence="5">
    <location>
        <begin position="905"/>
        <end position="941"/>
    </location>
</feature>
<feature type="domain" description="EGF-like 25; calcium-binding" evidence="5">
    <location>
        <begin position="943"/>
        <end position="979"/>
    </location>
</feature>
<feature type="domain" description="EGF-like 26" evidence="5">
    <location>
        <begin position="981"/>
        <end position="1017"/>
    </location>
</feature>
<feature type="domain" description="EGF-like 27; calcium-binding" evidence="5">
    <location>
        <begin position="1019"/>
        <end position="1055"/>
    </location>
</feature>
<feature type="domain" description="EGF-like 28" evidence="5">
    <location>
        <begin position="1057"/>
        <end position="1093"/>
    </location>
</feature>
<feature type="domain" description="EGF-like 29" evidence="5">
    <location>
        <begin position="1095"/>
        <end position="1141"/>
    </location>
</feature>
<feature type="domain" description="EGF-like 30; calcium-binding" evidence="5">
    <location>
        <begin position="1143"/>
        <end position="1179"/>
    </location>
</feature>
<feature type="domain" description="EGF-like 31; calcium-binding" evidence="5">
    <location>
        <begin position="1181"/>
        <end position="1217"/>
    </location>
</feature>
<feature type="domain" description="EGF-like 32; calcium-binding" evidence="5">
    <location>
        <begin position="1219"/>
        <end position="1263"/>
    </location>
</feature>
<feature type="domain" description="EGF-like 33" evidence="5">
    <location>
        <begin position="1265"/>
        <end position="1303"/>
    </location>
</feature>
<feature type="domain" description="EGF-like 34" evidence="5">
    <location>
        <begin position="1305"/>
        <end position="1344"/>
    </location>
</feature>
<feature type="domain" description="EGF-like 35" evidence="5">
    <location>
        <begin position="1346"/>
        <end position="1382"/>
    </location>
</feature>
<feature type="domain" description="EGF-like 36" evidence="5">
    <location>
        <begin position="1385"/>
        <end position="1423"/>
    </location>
</feature>
<feature type="repeat" description="LNR 1">
    <location>
        <begin position="1447"/>
        <end position="1487"/>
    </location>
</feature>
<feature type="repeat" description="LNR 2">
    <location>
        <begin position="1488"/>
        <end position="1525"/>
    </location>
</feature>
<feature type="repeat" description="LNR 3">
    <location>
        <begin position="1526"/>
        <end position="1566"/>
    </location>
</feature>
<feature type="repeat" description="ANK 1">
    <location>
        <begin position="1867"/>
        <end position="1910"/>
    </location>
</feature>
<feature type="repeat" description="ANK 2">
    <location>
        <begin position="1915"/>
        <end position="1944"/>
    </location>
</feature>
<feature type="repeat" description="ANK 3">
    <location>
        <begin position="1948"/>
        <end position="1978"/>
    </location>
</feature>
<feature type="repeat" description="ANK 4">
    <location>
        <begin position="1982"/>
        <end position="2011"/>
    </location>
</feature>
<feature type="repeat" description="ANK 5">
    <location>
        <begin position="2015"/>
        <end position="2044"/>
    </location>
</feature>
<feature type="repeat" description="ANK 6">
    <location>
        <begin position="2048"/>
        <end position="2077"/>
    </location>
</feature>
<feature type="region of interest" description="Disordered" evidence="6">
    <location>
        <begin position="1770"/>
        <end position="1790"/>
    </location>
</feature>
<feature type="region of interest" description="Disordered" evidence="6">
    <location>
        <begin position="2127"/>
        <end position="2174"/>
    </location>
</feature>
<feature type="region of interest" description="Disordered" evidence="6">
    <location>
        <begin position="2356"/>
        <end position="2437"/>
    </location>
</feature>
<feature type="compositionally biased region" description="Polar residues" evidence="6">
    <location>
        <begin position="2356"/>
        <end position="2387"/>
    </location>
</feature>
<feature type="compositionally biased region" description="Low complexity" evidence="6">
    <location>
        <begin position="2396"/>
        <end position="2411"/>
    </location>
</feature>
<feature type="compositionally biased region" description="Polar residues" evidence="6">
    <location>
        <begin position="2412"/>
        <end position="2429"/>
    </location>
</feature>
<feature type="site" description="Cleavage; by furin-like protease" evidence="3">
    <location>
        <begin position="1656"/>
        <end position="1657"/>
    </location>
</feature>
<feature type="site" description="Cleavage; by adam17" evidence="3">
    <location>
        <begin position="1712"/>
        <end position="1713"/>
    </location>
</feature>
<feature type="glycosylation site" description="O-linked (Fuc...) threonine; alternate" evidence="3">
    <location>
        <position position="231"/>
    </location>
</feature>
<feature type="glycosylation site" description="O-linked (GalNAc...) threonine; alternate" evidence="3">
    <location>
        <position position="231"/>
    </location>
</feature>
<feature type="glycosylation site" description="N-linked (GlcNAc...) asparagine" evidence="4">
    <location>
        <position position="957"/>
    </location>
</feature>
<feature type="glycosylation site" description="N-linked (GlcNAc...) asparagine" evidence="4">
    <location>
        <position position="1177"/>
    </location>
</feature>
<feature type="glycosylation site" description="O-linked (Fuc...) threonine; alternate" evidence="3">
    <location>
        <position position="1399"/>
    </location>
</feature>
<feature type="glycosylation site" description="O-linked (GalNAc...) threonine; alternate" evidence="3">
    <location>
        <position position="1399"/>
    </location>
</feature>
<feature type="glycosylation site" description="N-linked (GlcNAc...) asparagine" evidence="4">
    <location>
        <position position="1487"/>
    </location>
</feature>
<feature type="glycosylation site" description="N-linked (GlcNAc...) asparagine" evidence="4">
    <location>
        <position position="1585"/>
    </location>
</feature>
<feature type="disulfide bond" evidence="1">
    <location>
        <begin position="25"/>
        <end position="35"/>
    </location>
</feature>
<feature type="disulfide bond" evidence="1">
    <location>
        <begin position="29"/>
        <end position="45"/>
    </location>
</feature>
<feature type="disulfide bond" evidence="1">
    <location>
        <begin position="47"/>
        <end position="56"/>
    </location>
</feature>
<feature type="disulfide bond" evidence="1">
    <location>
        <begin position="62"/>
        <end position="73"/>
    </location>
</feature>
<feature type="disulfide bond" evidence="1">
    <location>
        <begin position="67"/>
        <end position="86"/>
    </location>
</feature>
<feature type="disulfide bond" evidence="1">
    <location>
        <begin position="88"/>
        <end position="97"/>
    </location>
</feature>
<feature type="disulfide bond" evidence="1">
    <location>
        <begin position="105"/>
        <end position="116"/>
    </location>
</feature>
<feature type="disulfide bond" evidence="1">
    <location>
        <begin position="110"/>
        <end position="126"/>
    </location>
</feature>
<feature type="disulfide bond" evidence="1">
    <location>
        <begin position="128"/>
        <end position="137"/>
    </location>
</feature>
<feature type="disulfide bond" evidence="1">
    <location>
        <begin position="143"/>
        <end position="154"/>
    </location>
</feature>
<feature type="disulfide bond" evidence="1">
    <location>
        <begin position="148"/>
        <end position="163"/>
    </location>
</feature>
<feature type="disulfide bond" evidence="1">
    <location>
        <begin position="165"/>
        <end position="174"/>
    </location>
</feature>
<feature type="disulfide bond" evidence="1">
    <location>
        <begin position="181"/>
        <end position="194"/>
    </location>
</feature>
<feature type="disulfide bond" evidence="1">
    <location>
        <begin position="188"/>
        <end position="203"/>
    </location>
</feature>
<feature type="disulfide bond" evidence="1">
    <location>
        <begin position="205"/>
        <end position="214"/>
    </location>
</feature>
<feature type="disulfide bond" evidence="1">
    <location>
        <begin position="221"/>
        <end position="232"/>
    </location>
</feature>
<feature type="disulfide bond" evidence="1">
    <location>
        <begin position="226"/>
        <end position="242"/>
    </location>
</feature>
<feature type="disulfide bond" evidence="1">
    <location>
        <begin position="244"/>
        <end position="253"/>
    </location>
</feature>
<feature type="disulfide bond" evidence="1">
    <location>
        <begin position="260"/>
        <end position="271"/>
    </location>
</feature>
<feature type="disulfide bond" evidence="1">
    <location>
        <begin position="265"/>
        <end position="280"/>
    </location>
</feature>
<feature type="disulfide bond" evidence="1">
    <location>
        <begin position="282"/>
        <end position="291"/>
    </location>
</feature>
<feature type="disulfide bond" evidence="1">
    <location>
        <begin position="298"/>
        <end position="311"/>
    </location>
</feature>
<feature type="disulfide bond" evidence="1">
    <location>
        <begin position="305"/>
        <end position="320"/>
    </location>
</feature>
<feature type="disulfide bond" evidence="1">
    <location>
        <begin position="322"/>
        <end position="331"/>
    </location>
</feature>
<feature type="disulfide bond" evidence="1">
    <location>
        <begin position="338"/>
        <end position="349"/>
    </location>
</feature>
<feature type="disulfide bond" evidence="1">
    <location>
        <begin position="343"/>
        <end position="358"/>
    </location>
</feature>
<feature type="disulfide bond" evidence="1">
    <location>
        <begin position="360"/>
        <end position="369"/>
    </location>
</feature>
<feature type="disulfide bond" evidence="1">
    <location>
        <begin position="375"/>
        <end position="386"/>
    </location>
</feature>
<feature type="disulfide bond" evidence="1">
    <location>
        <begin position="380"/>
        <end position="397"/>
    </location>
</feature>
<feature type="disulfide bond" evidence="1">
    <location>
        <begin position="399"/>
        <end position="408"/>
    </location>
</feature>
<feature type="disulfide bond" evidence="1">
    <location>
        <begin position="415"/>
        <end position="428"/>
    </location>
</feature>
<feature type="disulfide bond" evidence="1">
    <location>
        <begin position="422"/>
        <end position="437"/>
    </location>
</feature>
<feature type="disulfide bond" evidence="1">
    <location>
        <begin position="439"/>
        <end position="448"/>
    </location>
</feature>
<feature type="disulfide bond" evidence="1">
    <location>
        <begin position="455"/>
        <end position="466"/>
    </location>
</feature>
<feature type="disulfide bond" evidence="1">
    <location>
        <begin position="460"/>
        <end position="475"/>
    </location>
</feature>
<feature type="disulfide bond" evidence="1">
    <location>
        <begin position="477"/>
        <end position="486"/>
    </location>
</feature>
<feature type="disulfide bond" evidence="1">
    <location>
        <begin position="493"/>
        <end position="503"/>
    </location>
</feature>
<feature type="disulfide bond" evidence="1">
    <location>
        <begin position="498"/>
        <end position="512"/>
    </location>
</feature>
<feature type="disulfide bond" evidence="1">
    <location>
        <begin position="514"/>
        <end position="523"/>
    </location>
</feature>
<feature type="disulfide bond" evidence="1">
    <location>
        <begin position="530"/>
        <end position="541"/>
    </location>
</feature>
<feature type="disulfide bond" evidence="1">
    <location>
        <begin position="535"/>
        <end position="550"/>
    </location>
</feature>
<feature type="disulfide bond" evidence="1">
    <location>
        <begin position="552"/>
        <end position="561"/>
    </location>
</feature>
<feature type="disulfide bond" evidence="1">
    <location>
        <begin position="568"/>
        <end position="578"/>
    </location>
</feature>
<feature type="disulfide bond" evidence="1">
    <location>
        <begin position="573"/>
        <end position="587"/>
    </location>
</feature>
<feature type="disulfide bond" evidence="1">
    <location>
        <begin position="589"/>
        <end position="598"/>
    </location>
</feature>
<feature type="disulfide bond" evidence="1">
    <location>
        <begin position="605"/>
        <end position="616"/>
    </location>
</feature>
<feature type="disulfide bond" evidence="1">
    <location>
        <begin position="610"/>
        <end position="625"/>
    </location>
</feature>
<feature type="disulfide bond" evidence="1">
    <location>
        <begin position="627"/>
        <end position="636"/>
    </location>
</feature>
<feature type="disulfide bond" evidence="1">
    <location>
        <begin position="643"/>
        <end position="653"/>
    </location>
</feature>
<feature type="disulfide bond" evidence="1">
    <location>
        <begin position="648"/>
        <end position="662"/>
    </location>
</feature>
<feature type="disulfide bond" evidence="1">
    <location>
        <begin position="664"/>
        <end position="673"/>
    </location>
</feature>
<feature type="disulfide bond" evidence="1">
    <location>
        <begin position="680"/>
        <end position="691"/>
    </location>
</feature>
<feature type="disulfide bond" evidence="1">
    <location>
        <begin position="685"/>
        <end position="700"/>
    </location>
</feature>
<feature type="disulfide bond" evidence="1">
    <location>
        <begin position="702"/>
        <end position="711"/>
    </location>
</feature>
<feature type="disulfide bond" evidence="1">
    <location>
        <begin position="718"/>
        <end position="728"/>
    </location>
</feature>
<feature type="disulfide bond" evidence="1">
    <location>
        <begin position="723"/>
        <end position="737"/>
    </location>
</feature>
<feature type="disulfide bond" evidence="1">
    <location>
        <begin position="739"/>
        <end position="748"/>
    </location>
</feature>
<feature type="disulfide bond" evidence="1">
    <location>
        <begin position="755"/>
        <end position="766"/>
    </location>
</feature>
<feature type="disulfide bond" evidence="1">
    <location>
        <begin position="760"/>
        <end position="775"/>
    </location>
</feature>
<feature type="disulfide bond" evidence="1">
    <location>
        <begin position="777"/>
        <end position="786"/>
    </location>
</feature>
<feature type="disulfide bond" evidence="1">
    <location>
        <begin position="793"/>
        <end position="804"/>
    </location>
</feature>
<feature type="disulfide bond" evidence="1">
    <location>
        <begin position="798"/>
        <end position="813"/>
    </location>
</feature>
<feature type="disulfide bond" evidence="1">
    <location>
        <begin position="815"/>
        <end position="824"/>
    </location>
</feature>
<feature type="disulfide bond" evidence="1">
    <location>
        <begin position="831"/>
        <end position="842"/>
    </location>
</feature>
<feature type="disulfide bond" evidence="1">
    <location>
        <begin position="836"/>
        <end position="853"/>
    </location>
</feature>
<feature type="disulfide bond" evidence="1">
    <location>
        <begin position="855"/>
        <end position="864"/>
    </location>
</feature>
<feature type="disulfide bond" evidence="1">
    <location>
        <begin position="871"/>
        <end position="882"/>
    </location>
</feature>
<feature type="disulfide bond" evidence="1">
    <location>
        <begin position="876"/>
        <end position="891"/>
    </location>
</feature>
<feature type="disulfide bond" evidence="1">
    <location>
        <begin position="893"/>
        <end position="902"/>
    </location>
</feature>
<feature type="disulfide bond" evidence="1">
    <location>
        <begin position="909"/>
        <end position="920"/>
    </location>
</feature>
<feature type="disulfide bond" evidence="1">
    <location>
        <begin position="914"/>
        <end position="929"/>
    </location>
</feature>
<feature type="disulfide bond" evidence="1">
    <location>
        <begin position="931"/>
        <end position="940"/>
    </location>
</feature>
<feature type="disulfide bond" evidence="1">
    <location>
        <begin position="947"/>
        <end position="958"/>
    </location>
</feature>
<feature type="disulfide bond" evidence="1">
    <location>
        <begin position="952"/>
        <end position="967"/>
    </location>
</feature>
<feature type="disulfide bond" evidence="1">
    <location>
        <begin position="969"/>
        <end position="978"/>
    </location>
</feature>
<feature type="disulfide bond" evidence="1">
    <location>
        <begin position="985"/>
        <end position="996"/>
    </location>
</feature>
<feature type="disulfide bond" evidence="1">
    <location>
        <begin position="990"/>
        <end position="1005"/>
    </location>
</feature>
<feature type="disulfide bond" evidence="1">
    <location>
        <begin position="1007"/>
        <end position="1016"/>
    </location>
</feature>
<feature type="disulfide bond" evidence="1">
    <location>
        <begin position="1023"/>
        <end position="1034"/>
    </location>
</feature>
<feature type="disulfide bond" evidence="1">
    <location>
        <begin position="1028"/>
        <end position="1043"/>
    </location>
</feature>
<feature type="disulfide bond" evidence="1">
    <location>
        <begin position="1045"/>
        <end position="1054"/>
    </location>
</feature>
<feature type="disulfide bond" evidence="1">
    <location>
        <begin position="1061"/>
        <end position="1072"/>
    </location>
</feature>
<feature type="disulfide bond" evidence="1">
    <location>
        <begin position="1066"/>
        <end position="1081"/>
    </location>
</feature>
<feature type="disulfide bond" evidence="1">
    <location>
        <begin position="1083"/>
        <end position="1092"/>
    </location>
</feature>
<feature type="disulfide bond" evidence="2">
    <location>
        <begin position="1099"/>
        <end position="1120"/>
    </location>
</feature>
<feature type="disulfide bond" evidence="1">
    <location>
        <begin position="1114"/>
        <end position="1129"/>
    </location>
</feature>
<feature type="disulfide bond" evidence="1">
    <location>
        <begin position="1131"/>
        <end position="1140"/>
    </location>
</feature>
<feature type="disulfide bond" evidence="1">
    <location>
        <begin position="1147"/>
        <end position="1158"/>
    </location>
</feature>
<feature type="disulfide bond" evidence="1">
    <location>
        <begin position="1152"/>
        <end position="1167"/>
    </location>
</feature>
<feature type="disulfide bond" evidence="1">
    <location>
        <begin position="1169"/>
        <end position="1178"/>
    </location>
</feature>
<feature type="disulfide bond" evidence="1">
    <location>
        <begin position="1185"/>
        <end position="1196"/>
    </location>
</feature>
<feature type="disulfide bond" evidence="1">
    <location>
        <begin position="1190"/>
        <end position="1205"/>
    </location>
</feature>
<feature type="disulfide bond" evidence="1">
    <location>
        <begin position="1207"/>
        <end position="1216"/>
    </location>
</feature>
<feature type="disulfide bond" evidence="1">
    <location>
        <begin position="1223"/>
        <end position="1242"/>
    </location>
</feature>
<feature type="disulfide bond" evidence="1">
    <location>
        <begin position="1236"/>
        <end position="1251"/>
    </location>
</feature>
<feature type="disulfide bond" evidence="1">
    <location>
        <begin position="1253"/>
        <end position="1262"/>
    </location>
</feature>
<feature type="disulfide bond" evidence="1">
    <location>
        <begin position="1269"/>
        <end position="1282"/>
    </location>
</feature>
<feature type="disulfide bond" evidence="1">
    <location>
        <begin position="1274"/>
        <end position="1291"/>
    </location>
</feature>
<feature type="disulfide bond" evidence="1">
    <location>
        <begin position="1293"/>
        <end position="1302"/>
    </location>
</feature>
<feature type="disulfide bond" evidence="1">
    <location>
        <begin position="1309"/>
        <end position="1320"/>
    </location>
</feature>
<feature type="disulfide bond" evidence="1">
    <location>
        <begin position="1314"/>
        <end position="1332"/>
    </location>
</feature>
<feature type="disulfide bond" evidence="1">
    <location>
        <begin position="1334"/>
        <end position="1343"/>
    </location>
</feature>
<feature type="disulfide bond" evidence="1">
    <location>
        <begin position="1350"/>
        <end position="1361"/>
    </location>
</feature>
<feature type="disulfide bond" evidence="1">
    <location>
        <begin position="1355"/>
        <end position="1370"/>
    </location>
</feature>
<feature type="disulfide bond" evidence="1">
    <location>
        <begin position="1372"/>
        <end position="1381"/>
    </location>
</feature>
<feature type="disulfide bond" evidence="1">
    <location>
        <begin position="1389"/>
        <end position="1400"/>
    </location>
</feature>
<feature type="disulfide bond" evidence="1">
    <location>
        <begin position="1394"/>
        <end position="1411"/>
    </location>
</feature>
<feature type="disulfide bond" evidence="1">
    <location>
        <begin position="1413"/>
        <end position="1422"/>
    </location>
</feature>
<feature type="disulfide bond" evidence="1">
    <location>
        <begin position="1447"/>
        <end position="1470"/>
    </location>
</feature>
<feature type="disulfide bond" evidence="1">
    <location>
        <begin position="1452"/>
        <end position="1465"/>
    </location>
</feature>
<feature type="disulfide bond" evidence="1">
    <location>
        <begin position="1461"/>
        <end position="1477"/>
    </location>
</feature>
<feature type="disulfide bond" evidence="1">
    <location>
        <begin position="1488"/>
        <end position="1512"/>
    </location>
</feature>
<feature type="disulfide bond" evidence="1">
    <location>
        <begin position="1494"/>
        <end position="1507"/>
    </location>
</feature>
<feature type="disulfide bond" evidence="1">
    <location>
        <begin position="1503"/>
        <end position="1519"/>
    </location>
</feature>
<feature type="disulfide bond" evidence="1">
    <location>
        <begin position="1526"/>
        <end position="1552"/>
    </location>
</feature>
<feature type="disulfide bond" evidence="1">
    <location>
        <begin position="1534"/>
        <end position="1547"/>
    </location>
</feature>
<feature type="disulfide bond" evidence="1">
    <location>
        <begin position="1543"/>
        <end position="1559"/>
    </location>
</feature>
<name>NOTC1_DANRE</name>
<proteinExistence type="evidence at transcript level"/>
<evidence type="ECO:0000250" key="1"/>
<evidence type="ECO:0000250" key="2">
    <source>
        <dbReference type="UniProtKB" id="P46531"/>
    </source>
</evidence>
<evidence type="ECO:0000250" key="3">
    <source>
        <dbReference type="UniProtKB" id="Q01705"/>
    </source>
</evidence>
<evidence type="ECO:0000255" key="4"/>
<evidence type="ECO:0000255" key="5">
    <source>
        <dbReference type="PROSITE-ProRule" id="PRU00076"/>
    </source>
</evidence>
<evidence type="ECO:0000256" key="6">
    <source>
        <dbReference type="SAM" id="MobiDB-lite"/>
    </source>
</evidence>
<evidence type="ECO:0000305" key="7"/>
<gene>
    <name type="primary">notch1a</name>
    <name type="synonym">notch</name>
</gene>
<comment type="function">
    <text evidence="3">Functions as a receptor for membrane-bound ligands Jagged-1 (JAG1), Jagged-2 (JAG2) and Delta-1 (DLL1) to regulate cell-fate determination. Upon ligand activation through the released notch intracellular domain (NICD) it forms a transcriptional activator complex with RBPJ/RBPSUH and activates genes of the enhancer of split locus. Affects the implementation of differentiation, proliferation and apoptotic programs. Involved in angiogenesis; negatively regulates endothelial cell proliferation and migration and angiogenic sprouting. Involved in the maturation of both CD4(+) and CD8(+) cells in the thymus. Important for follicular differentiation and possibly cell fate selection within the follicle. During cerebellar development, functions as a receptor for neuronal DNER and is involved in the differentiation of Bergmann glia. Represses neuronal and myogenic differentiation. May play an essential role in postimplantation development, probably in some aspect of cell specification and/or differentiation. May be involved in mesoderm development, somite formation and neurogenesis (By similarity). Involved in determination of left/right symmetry by modulating the balance between motile and immotile (sensory) cilia at the left-right organiser (LRO) (By similarity).</text>
</comment>
<comment type="subcellular location">
    <subcellularLocation>
        <location evidence="3">Cell membrane</location>
        <topology evidence="3">Single-pass type I membrane protein</topology>
    </subcellularLocation>
</comment>
<comment type="subcellular location">
    <molecule>Notch 1 intracellular domain</molecule>
    <subcellularLocation>
        <location evidence="3">Nucleus</location>
    </subcellularLocation>
    <text evidence="3">Following proteolytical processing NICD is translocated to the nucleus.</text>
</comment>
<comment type="developmental stage">
    <text>Expressed in all cells in pregastrulation stages. During gastrulation is differentially expressed, accumulating predominantly in the prechordal mesoderm and notochord. At the end of gastrulation, expressed along the anterior-posterior axis including the developing neural plate and differentiating mesoderm. Also present in the developing brain and head regions.</text>
</comment>
<comment type="PTM">
    <text evidence="3">Synthesized in the endoplasmic reticulum as an inactive form which is proteolytically cleaved by a furin-like convertase in the trans-Golgi network before it reaches the plasma membrane to yield an active, ligand-accessible form. Cleavage results in a C-terminal fragment N(TM) and a N-terminal fragment N(EC). Following ligand binding, it is cleaved by adam17 to yield a membrane-associated intermediate fragment called notch extracellular truncation (NEXT). Following endocytosis, this fragment is then cleaved by presenilin dependent gamma-secretase to release a Notch-derived peptide containing the intracellular domain (NICD) from the membrane (By similarity).</text>
</comment>
<comment type="PTM">
    <text evidence="3">O-glycosylated on the EGF-like domains. Contains both O-linked fucose and O-linked glucose. O-linked glycosylation by galnt11 is involved in determination of left/right symmetry: glycosylation promotes activation of notch1, possibly by promoting cleavage by adam17, modulating the balance between motile and immotile (sensory) cilia at the left-right organiser (LRO) (By similarity).</text>
</comment>
<comment type="similarity">
    <text evidence="7">Belongs to the NOTCH family.</text>
</comment>
<sequence length="2437" mass="262308">MNRFLVKLTLLTAASLATVAQGQRCSEYCQNGGICEYKPSGEASCRCPADFVGAQCQFPNPCNPSPCRNGGVCRPQMQGNEVGVKCDCVLGFSDRLCLTPVNHACMNSPCRNGGTCSLLTLDTFTCRCQPGWSGKTCQLADPCASNPCANGGQCSAFESHYICTCPPNFHGQTCRQDVNECAVSPSPCRNGGTCINEVGSYLCRCPPEYTGPHCQRLYQPCLPSPCRSGGTCVQTSDTTHTCSCLPGFTGQTCEHNVDDCTQHACENGGPCIDGINTYNCHCDKHWTGQYCTEDVDECELSPNACQNGGTCHNTIGGFHCVCVNGWTGDDCSENIDDCASAACSHGATCHDRVASFFCECPHGRTGLLCHLDDACISNPCQKGSNCDTNPVSGKAICTCPPGYTGSACNQDIDECSLGANPCEHGGRCLNTKGSFQCKCLQGYEGPRCEMDVNECKSNPCQNDATCLDQIGGFHCICMPGYEGVFCQINSDDCASQPCLNGKCIDKINSFHCECPKGFSGSLCQVDVDECASTPCKNGAKCTDGPNKYTCECTPGFSGIHCELDINECASSPCHYGVCRDGVASFTCDCRPGYTGRLCETNINECLSQPCRNGGTCQDRENAYICTCPKGTTGVNCEINIDDCKRKPCDYGKCIDKINGYECVCEPGYSGSMCNINIDDCALNPCHNGGTCIDGVNSFTCLCPDGFRDATCLSQHNECSSNPCIHGSCLDQINSYRCVCEAGWMGRNCDININECLSNPCVNGGTCKDMTSGYLCTCRAGFSGPNCQMNINECASNPCLNQGSCIDDVAGFKCNCMLPYTGEVCENVLAPCSPRPCKNGGVCRESEDFQSFSCNCPAGWQGQTCEVDINECVRNPCTNGGVCENLRGGFQCRCNPGFTGALCENDIDDCEPNPCSNGGVCQDRVNGFVCVCLAGFRGERCAEDIDECVSAPCRNGGNCTDCVNSYTCSCPAGFSGINCEINTPDCTESSCFNGGTCVDGISSFSCVCLPGFTGNYCQHDVNECDSRPCQNGGSCQDGYGTYKCTCPHGYTGLNCQSLVRWCDSSPCKNGGSCWQQGASFTCQCASGWTGIYCDVPSVSCEVAARQQGVSVAVLCRHAGQCVDAGNTHLCRCQAGYTGSYCQEQVDECQPNPCQNGATCTDYLGGYSCECVPGYHGMNCSKEINECLSQPCQNGGTCIDLVNTYKCSCPRGTQGVHCEIDIDDCSPSVDPLTGEPRCFNGGRCVDRVGGYGCVCPAGFVGERCEGDVNECLSDPCDPSGSYNCVQLINDFRCECRTGYTGKRCETVFNGCKDTPCKNGGTCAVASNTKHGYICKCQPGYSGSSCEYDSQSCGSLRCRNGATCVSGHLSPRCLCAPGFSGHECQTRMDSPCLVNPCYNGGTCQPISDAPFYRCSCPANFNGLLCHILDYSFSGGQGRDIAPPVEVEIRCEIAQCEGRGGNAICDTQCNNHACGWDGGDCSLNFDDPWQNCSAALQCWRYFNDGKCDEQCATAGCLYDGFDCQRLEGQCNPLYDQYCRDHYADGHCDQGCNNAECEWDGLDCADDVPQKLAVGSLVLVVHIPPDELRNRSSSFLRELSSLLHTNVVFRRDANGEALIFPYYGSEHELSKHKRSDWTDPGQLMQRARRSLTSFLKPRTRRELDHMEVKGSIVYLEIDNRQCFQQSDECFQSATDVAAFLGALASSGNLNVPYIIEAVTSEGGPPKTGEMYPMFLVLLALAVLALAAVGVVVSRKRKREHGQLWFPEGFKVNEPKKKRREPVGEDSVGLKPLKNSDSSLMDEQLSEWAEDDTNKRFRFEGQSILEMSGQLDHRQWTQQHLDAADLRLNSMAPTPPQGQIENDCMDVNVRGPDGFTPLMIASCSGGGLENENGEAEEDPSADVITDFIYHGANLHNQTDRTGETALHLAARYARSDAAKRLLESCADANVQDNMGRTPLHAAVAADAQGVFQILIRNRATDLDARMHDGTTPLILATRLAVEGMVEELINCHADPNAVDDSGKSALHWAAAVNNVDAAVVLLKNGANKDLQNNKEETPLFLAAREGSYETAKVLLDHLANRDIADHLDQLPRDIAHERMHHDIVRLLEEYNLVRSPPLPLSPPLCCPNTYLGIKPSPGNNNNTAKKTRKPGGKGVGGKDSGKDIRTKKKKSGDGKNGGIMEVGVLSPVDSLESPHGYLSDVSSPPMMTSPFQQSPPISLNQLQGLADSHMGGALQGLGKPFDSAPRLSHLPVANNVGGAQAGACDWLQRVQQQQQQQQQQQQAGMLMPTMLSATNMPQVMGYPTMQSSHLGAPSHMIAHQNMAPMQHQNISHHFLGDLSGLDLQSSSGHAPIQTILPQDSQRMAPPISSTQFLTPPSQHSYSNPMDNTPNHQQVPDHPFLTPSAGSPDQWSSSSPHSNLSDWSEGISSPPTSMQMNHIPEAFK</sequence>
<accession>P46530</accession>